<organism>
    <name type="scientific">Laribacter hongkongensis (strain HLHK9)</name>
    <dbReference type="NCBI Taxonomy" id="557598"/>
    <lineage>
        <taxon>Bacteria</taxon>
        <taxon>Pseudomonadati</taxon>
        <taxon>Pseudomonadota</taxon>
        <taxon>Betaproteobacteria</taxon>
        <taxon>Neisseriales</taxon>
        <taxon>Aquaspirillaceae</taxon>
        <taxon>Laribacter</taxon>
    </lineage>
</organism>
<gene>
    <name evidence="1" type="primary">ureA</name>
    <name type="ordered locus">LHK_01035</name>
</gene>
<reference key="1">
    <citation type="journal article" date="2009" name="PLoS Genet.">
        <title>The complete genome and proteome of Laribacter hongkongensis reveal potential mechanisms for adaptations to different temperatures and habitats.</title>
        <authorList>
            <person name="Woo P.C.Y."/>
            <person name="Lau S.K.P."/>
            <person name="Tse H."/>
            <person name="Teng J.L.L."/>
            <person name="Curreem S.O."/>
            <person name="Tsang A.K.L."/>
            <person name="Fan R.Y.Y."/>
            <person name="Wong G.K.M."/>
            <person name="Huang Y."/>
            <person name="Loman N.J."/>
            <person name="Snyder L.A.S."/>
            <person name="Cai J.J."/>
            <person name="Huang J.-D."/>
            <person name="Mak W."/>
            <person name="Pallen M.J."/>
            <person name="Lok S."/>
            <person name="Yuen K.-Y."/>
        </authorList>
    </citation>
    <scope>NUCLEOTIDE SEQUENCE [LARGE SCALE GENOMIC DNA]</scope>
    <source>
        <strain>HLHK9</strain>
    </source>
</reference>
<comment type="catalytic activity">
    <reaction evidence="1">
        <text>urea + 2 H2O + H(+) = hydrogencarbonate + 2 NH4(+)</text>
        <dbReference type="Rhea" id="RHEA:20557"/>
        <dbReference type="ChEBI" id="CHEBI:15377"/>
        <dbReference type="ChEBI" id="CHEBI:15378"/>
        <dbReference type="ChEBI" id="CHEBI:16199"/>
        <dbReference type="ChEBI" id="CHEBI:17544"/>
        <dbReference type="ChEBI" id="CHEBI:28938"/>
        <dbReference type="EC" id="3.5.1.5"/>
    </reaction>
</comment>
<comment type="pathway">
    <text evidence="1">Nitrogen metabolism; urea degradation; CO(2) and NH(3) from urea (urease route): step 1/1.</text>
</comment>
<comment type="subunit">
    <text evidence="1">Heterotrimer of UreA (gamma), UreB (beta) and UreC (alpha) subunits. Three heterotrimers associate to form the active enzyme.</text>
</comment>
<comment type="subcellular location">
    <subcellularLocation>
        <location evidence="1">Cytoplasm</location>
    </subcellularLocation>
</comment>
<comment type="similarity">
    <text evidence="1">Belongs to the urease gamma subunit family.</text>
</comment>
<protein>
    <recommendedName>
        <fullName evidence="1">Urease subunit gamma</fullName>
        <ecNumber evidence="1">3.5.1.5</ecNumber>
    </recommendedName>
    <alternativeName>
        <fullName evidence="1">Urea amidohydrolase subunit gamma</fullName>
    </alternativeName>
</protein>
<proteinExistence type="inferred from homology"/>
<evidence type="ECO:0000255" key="1">
    <source>
        <dbReference type="HAMAP-Rule" id="MF_00739"/>
    </source>
</evidence>
<keyword id="KW-0963">Cytoplasm</keyword>
<keyword id="KW-0378">Hydrolase</keyword>
<keyword id="KW-1185">Reference proteome</keyword>
<accession>C1D5Z6</accession>
<name>URE3_LARHH</name>
<dbReference type="EC" id="3.5.1.5" evidence="1"/>
<dbReference type="EMBL" id="CP001154">
    <property type="protein sequence ID" value="ACO74027.1"/>
    <property type="molecule type" value="Genomic_DNA"/>
</dbReference>
<dbReference type="RefSeq" id="WP_012696517.1">
    <property type="nucleotide sequence ID" value="NC_012559.1"/>
</dbReference>
<dbReference type="SMR" id="C1D5Z6"/>
<dbReference type="STRING" id="557598.LHK_01035"/>
<dbReference type="KEGG" id="lhk:LHK_01035"/>
<dbReference type="eggNOG" id="COG0831">
    <property type="taxonomic scope" value="Bacteria"/>
</dbReference>
<dbReference type="HOGENOM" id="CLU_145825_1_0_4"/>
<dbReference type="UniPathway" id="UPA00258">
    <property type="reaction ID" value="UER00370"/>
</dbReference>
<dbReference type="Proteomes" id="UP000002010">
    <property type="component" value="Chromosome"/>
</dbReference>
<dbReference type="GO" id="GO:0005737">
    <property type="term" value="C:cytoplasm"/>
    <property type="evidence" value="ECO:0007669"/>
    <property type="project" value="UniProtKB-SubCell"/>
</dbReference>
<dbReference type="GO" id="GO:0016151">
    <property type="term" value="F:nickel cation binding"/>
    <property type="evidence" value="ECO:0007669"/>
    <property type="project" value="InterPro"/>
</dbReference>
<dbReference type="GO" id="GO:0009039">
    <property type="term" value="F:urease activity"/>
    <property type="evidence" value="ECO:0007669"/>
    <property type="project" value="UniProtKB-UniRule"/>
</dbReference>
<dbReference type="GO" id="GO:0043419">
    <property type="term" value="P:urea catabolic process"/>
    <property type="evidence" value="ECO:0007669"/>
    <property type="project" value="UniProtKB-UniRule"/>
</dbReference>
<dbReference type="CDD" id="cd00390">
    <property type="entry name" value="Urease_gamma"/>
    <property type="match status" value="1"/>
</dbReference>
<dbReference type="Gene3D" id="3.30.280.10">
    <property type="entry name" value="Urease, gamma-like subunit"/>
    <property type="match status" value="1"/>
</dbReference>
<dbReference type="HAMAP" id="MF_00739">
    <property type="entry name" value="Urease_gamma"/>
    <property type="match status" value="1"/>
</dbReference>
<dbReference type="InterPro" id="IPR012010">
    <property type="entry name" value="Urease_gamma"/>
</dbReference>
<dbReference type="InterPro" id="IPR002026">
    <property type="entry name" value="Urease_gamma/gamma-beta_su"/>
</dbReference>
<dbReference type="InterPro" id="IPR036463">
    <property type="entry name" value="Urease_gamma_sf"/>
</dbReference>
<dbReference type="InterPro" id="IPR050069">
    <property type="entry name" value="Urease_subunit"/>
</dbReference>
<dbReference type="NCBIfam" id="NF009712">
    <property type="entry name" value="PRK13241.1"/>
    <property type="match status" value="1"/>
</dbReference>
<dbReference type="NCBIfam" id="TIGR00193">
    <property type="entry name" value="urease_gam"/>
    <property type="match status" value="1"/>
</dbReference>
<dbReference type="PANTHER" id="PTHR33569">
    <property type="entry name" value="UREASE"/>
    <property type="match status" value="1"/>
</dbReference>
<dbReference type="PANTHER" id="PTHR33569:SF1">
    <property type="entry name" value="UREASE"/>
    <property type="match status" value="1"/>
</dbReference>
<dbReference type="Pfam" id="PF00547">
    <property type="entry name" value="Urease_gamma"/>
    <property type="match status" value="1"/>
</dbReference>
<dbReference type="PIRSF" id="PIRSF001223">
    <property type="entry name" value="Urease_gamma"/>
    <property type="match status" value="1"/>
</dbReference>
<dbReference type="SUPFAM" id="SSF54111">
    <property type="entry name" value="Urease, gamma-subunit"/>
    <property type="match status" value="1"/>
</dbReference>
<sequence>MHLTPRELDKLMIYCLAEVAHKRKAQGIKLNHPESVAVISAAALDGARAGKTVEDVMKDAATVLTRDDVMEGVPEMIPLVQVEAVFTDGSRLVTVHSPIQ</sequence>
<feature type="chain" id="PRO_1000199867" description="Urease subunit gamma">
    <location>
        <begin position="1"/>
        <end position="100"/>
    </location>
</feature>